<name>RS4_HAHCH</name>
<reference key="1">
    <citation type="journal article" date="2005" name="Nucleic Acids Res.">
        <title>Genomic blueprint of Hahella chejuensis, a marine microbe producing an algicidal agent.</title>
        <authorList>
            <person name="Jeong H."/>
            <person name="Yim J.H."/>
            <person name="Lee C."/>
            <person name="Choi S.-H."/>
            <person name="Park Y.K."/>
            <person name="Yoon S.H."/>
            <person name="Hur C.-G."/>
            <person name="Kang H.-Y."/>
            <person name="Kim D."/>
            <person name="Lee H.H."/>
            <person name="Park K.H."/>
            <person name="Park S.-H."/>
            <person name="Park H.-S."/>
            <person name="Lee H.K."/>
            <person name="Oh T.K."/>
            <person name="Kim J.F."/>
        </authorList>
    </citation>
    <scope>NUCLEOTIDE SEQUENCE [LARGE SCALE GENOMIC DNA]</scope>
    <source>
        <strain>KCTC 2396</strain>
    </source>
</reference>
<keyword id="KW-1185">Reference proteome</keyword>
<keyword id="KW-0687">Ribonucleoprotein</keyword>
<keyword id="KW-0689">Ribosomal protein</keyword>
<keyword id="KW-0694">RNA-binding</keyword>
<keyword id="KW-0699">rRNA-binding</keyword>
<feature type="chain" id="PRO_0000293289" description="Small ribosomal subunit protein uS4">
    <location>
        <begin position="1"/>
        <end position="206"/>
    </location>
</feature>
<feature type="domain" description="S4 RNA-binding" evidence="1">
    <location>
        <begin position="96"/>
        <end position="156"/>
    </location>
</feature>
<gene>
    <name evidence="1" type="primary">rpsD</name>
    <name type="ordered locus">HCH_06194</name>
</gene>
<sequence>MARYIGPKCKLSRREGTDLFLKSGARALDSKCNMETAPGQHGQRRGRLSDYGLQLREKQKVRRMYGVLEKQFRNYYKEAARIKGATGENLLQLLERRLDNVVYRMGFGSTRSEARQLVSHKAILVNGKAVNIPSYQVKPGDVVSIREKSKNQLRIKGSLELAAQRATLEWIEVDAAKMSGTFKSVPERTDLSPDINENLIVELYSK</sequence>
<comment type="function">
    <text evidence="1">One of the primary rRNA binding proteins, it binds directly to 16S rRNA where it nucleates assembly of the body of the 30S subunit.</text>
</comment>
<comment type="function">
    <text evidence="1">With S5 and S12 plays an important role in translational accuracy.</text>
</comment>
<comment type="subunit">
    <text evidence="1">Part of the 30S ribosomal subunit. Contacts protein S5. The interaction surface between S4 and S5 is involved in control of translational fidelity.</text>
</comment>
<comment type="similarity">
    <text evidence="1">Belongs to the universal ribosomal protein uS4 family.</text>
</comment>
<organism>
    <name type="scientific">Hahella chejuensis (strain KCTC 2396)</name>
    <dbReference type="NCBI Taxonomy" id="349521"/>
    <lineage>
        <taxon>Bacteria</taxon>
        <taxon>Pseudomonadati</taxon>
        <taxon>Pseudomonadota</taxon>
        <taxon>Gammaproteobacteria</taxon>
        <taxon>Oceanospirillales</taxon>
        <taxon>Hahellaceae</taxon>
        <taxon>Hahella</taxon>
    </lineage>
</organism>
<protein>
    <recommendedName>
        <fullName evidence="1">Small ribosomal subunit protein uS4</fullName>
    </recommendedName>
    <alternativeName>
        <fullName evidence="2">30S ribosomal protein S4</fullName>
    </alternativeName>
</protein>
<accession>Q2S936</accession>
<dbReference type="EMBL" id="CP000155">
    <property type="protein sequence ID" value="ABC32838.1"/>
    <property type="molecule type" value="Genomic_DNA"/>
</dbReference>
<dbReference type="RefSeq" id="WP_011399896.1">
    <property type="nucleotide sequence ID" value="NC_007645.1"/>
</dbReference>
<dbReference type="SMR" id="Q2S936"/>
<dbReference type="STRING" id="349521.HCH_06194"/>
<dbReference type="KEGG" id="hch:HCH_06194"/>
<dbReference type="eggNOG" id="COG0522">
    <property type="taxonomic scope" value="Bacteria"/>
</dbReference>
<dbReference type="HOGENOM" id="CLU_092403_0_2_6"/>
<dbReference type="OrthoDB" id="9803672at2"/>
<dbReference type="Proteomes" id="UP000000238">
    <property type="component" value="Chromosome"/>
</dbReference>
<dbReference type="GO" id="GO:0015935">
    <property type="term" value="C:small ribosomal subunit"/>
    <property type="evidence" value="ECO:0007669"/>
    <property type="project" value="InterPro"/>
</dbReference>
<dbReference type="GO" id="GO:0019843">
    <property type="term" value="F:rRNA binding"/>
    <property type="evidence" value="ECO:0007669"/>
    <property type="project" value="UniProtKB-UniRule"/>
</dbReference>
<dbReference type="GO" id="GO:0003735">
    <property type="term" value="F:structural constituent of ribosome"/>
    <property type="evidence" value="ECO:0007669"/>
    <property type="project" value="InterPro"/>
</dbReference>
<dbReference type="GO" id="GO:0042274">
    <property type="term" value="P:ribosomal small subunit biogenesis"/>
    <property type="evidence" value="ECO:0007669"/>
    <property type="project" value="TreeGrafter"/>
</dbReference>
<dbReference type="GO" id="GO:0006412">
    <property type="term" value="P:translation"/>
    <property type="evidence" value="ECO:0007669"/>
    <property type="project" value="UniProtKB-UniRule"/>
</dbReference>
<dbReference type="CDD" id="cd00165">
    <property type="entry name" value="S4"/>
    <property type="match status" value="1"/>
</dbReference>
<dbReference type="FunFam" id="1.10.1050.10:FF:000001">
    <property type="entry name" value="30S ribosomal protein S4"/>
    <property type="match status" value="1"/>
</dbReference>
<dbReference type="FunFam" id="3.10.290.10:FF:000001">
    <property type="entry name" value="30S ribosomal protein S4"/>
    <property type="match status" value="1"/>
</dbReference>
<dbReference type="Gene3D" id="1.10.1050.10">
    <property type="entry name" value="Ribosomal Protein S4 Delta 41, Chain A, domain 1"/>
    <property type="match status" value="1"/>
</dbReference>
<dbReference type="Gene3D" id="3.10.290.10">
    <property type="entry name" value="RNA-binding S4 domain"/>
    <property type="match status" value="1"/>
</dbReference>
<dbReference type="HAMAP" id="MF_01306_B">
    <property type="entry name" value="Ribosomal_uS4_B"/>
    <property type="match status" value="1"/>
</dbReference>
<dbReference type="InterPro" id="IPR022801">
    <property type="entry name" value="Ribosomal_uS4"/>
</dbReference>
<dbReference type="InterPro" id="IPR005709">
    <property type="entry name" value="Ribosomal_uS4_bac-type"/>
</dbReference>
<dbReference type="InterPro" id="IPR018079">
    <property type="entry name" value="Ribosomal_uS4_CS"/>
</dbReference>
<dbReference type="InterPro" id="IPR001912">
    <property type="entry name" value="Ribosomal_uS4_N"/>
</dbReference>
<dbReference type="InterPro" id="IPR002942">
    <property type="entry name" value="S4_RNA-bd"/>
</dbReference>
<dbReference type="InterPro" id="IPR036986">
    <property type="entry name" value="S4_RNA-bd_sf"/>
</dbReference>
<dbReference type="NCBIfam" id="NF003717">
    <property type="entry name" value="PRK05327.1"/>
    <property type="match status" value="1"/>
</dbReference>
<dbReference type="NCBIfam" id="TIGR01017">
    <property type="entry name" value="rpsD_bact"/>
    <property type="match status" value="1"/>
</dbReference>
<dbReference type="PANTHER" id="PTHR11831">
    <property type="entry name" value="30S 40S RIBOSOMAL PROTEIN"/>
    <property type="match status" value="1"/>
</dbReference>
<dbReference type="PANTHER" id="PTHR11831:SF4">
    <property type="entry name" value="SMALL RIBOSOMAL SUBUNIT PROTEIN US4M"/>
    <property type="match status" value="1"/>
</dbReference>
<dbReference type="Pfam" id="PF00163">
    <property type="entry name" value="Ribosomal_S4"/>
    <property type="match status" value="1"/>
</dbReference>
<dbReference type="Pfam" id="PF01479">
    <property type="entry name" value="S4"/>
    <property type="match status" value="1"/>
</dbReference>
<dbReference type="SMART" id="SM01390">
    <property type="entry name" value="Ribosomal_S4"/>
    <property type="match status" value="1"/>
</dbReference>
<dbReference type="SMART" id="SM00363">
    <property type="entry name" value="S4"/>
    <property type="match status" value="1"/>
</dbReference>
<dbReference type="SUPFAM" id="SSF55174">
    <property type="entry name" value="Alpha-L RNA-binding motif"/>
    <property type="match status" value="1"/>
</dbReference>
<dbReference type="PROSITE" id="PS00632">
    <property type="entry name" value="RIBOSOMAL_S4"/>
    <property type="match status" value="1"/>
</dbReference>
<dbReference type="PROSITE" id="PS50889">
    <property type="entry name" value="S4"/>
    <property type="match status" value="1"/>
</dbReference>
<proteinExistence type="inferred from homology"/>
<evidence type="ECO:0000255" key="1">
    <source>
        <dbReference type="HAMAP-Rule" id="MF_01306"/>
    </source>
</evidence>
<evidence type="ECO:0000305" key="2"/>